<comment type="function">
    <text evidence="1">Reversibly transfers an adenylyl group from ATP to 4'-phosphopantetheine, yielding dephospho-CoA (dPCoA) and pyrophosphate.</text>
</comment>
<comment type="catalytic activity">
    <reaction evidence="1">
        <text>(R)-4'-phosphopantetheine + ATP + H(+) = 3'-dephospho-CoA + diphosphate</text>
        <dbReference type="Rhea" id="RHEA:19801"/>
        <dbReference type="ChEBI" id="CHEBI:15378"/>
        <dbReference type="ChEBI" id="CHEBI:30616"/>
        <dbReference type="ChEBI" id="CHEBI:33019"/>
        <dbReference type="ChEBI" id="CHEBI:57328"/>
        <dbReference type="ChEBI" id="CHEBI:61723"/>
        <dbReference type="EC" id="2.7.7.3"/>
    </reaction>
</comment>
<comment type="cofactor">
    <cofactor evidence="1">
        <name>Mg(2+)</name>
        <dbReference type="ChEBI" id="CHEBI:18420"/>
    </cofactor>
</comment>
<comment type="pathway">
    <text evidence="1">Cofactor biosynthesis; coenzyme A biosynthesis; CoA from (R)-pantothenate: step 4/5.</text>
</comment>
<comment type="subunit">
    <text evidence="1">Homohexamer.</text>
</comment>
<comment type="subcellular location">
    <subcellularLocation>
        <location evidence="1">Cytoplasm</location>
    </subcellularLocation>
</comment>
<comment type="similarity">
    <text evidence="1">Belongs to the bacterial CoaD family.</text>
</comment>
<keyword id="KW-0002">3D-structure</keyword>
<keyword id="KW-0067">ATP-binding</keyword>
<keyword id="KW-0173">Coenzyme A biosynthesis</keyword>
<keyword id="KW-0963">Cytoplasm</keyword>
<keyword id="KW-0460">Magnesium</keyword>
<keyword id="KW-0547">Nucleotide-binding</keyword>
<keyword id="KW-0548">Nucleotidyltransferase</keyword>
<keyword id="KW-1185">Reference proteome</keyword>
<keyword id="KW-0808">Transferase</keyword>
<organism>
    <name type="scientific">Coxiella burnetii (strain RSA 493 / Nine Mile phase I)</name>
    <dbReference type="NCBI Taxonomy" id="227377"/>
    <lineage>
        <taxon>Bacteria</taxon>
        <taxon>Pseudomonadati</taxon>
        <taxon>Pseudomonadota</taxon>
        <taxon>Gammaproteobacteria</taxon>
        <taxon>Legionellales</taxon>
        <taxon>Coxiellaceae</taxon>
        <taxon>Coxiella</taxon>
    </lineage>
</organism>
<feature type="chain" id="PRO_0000156200" description="Phosphopantetheine adenylyltransferase">
    <location>
        <begin position="1"/>
        <end position="159"/>
    </location>
</feature>
<feature type="binding site" evidence="1">
    <location>
        <begin position="10"/>
        <end position="11"/>
    </location>
    <ligand>
        <name>ATP</name>
        <dbReference type="ChEBI" id="CHEBI:30616"/>
    </ligand>
</feature>
<feature type="binding site" evidence="1">
    <location>
        <position position="10"/>
    </location>
    <ligand>
        <name>substrate</name>
    </ligand>
</feature>
<feature type="binding site" evidence="1">
    <location>
        <position position="18"/>
    </location>
    <ligand>
        <name>ATP</name>
        <dbReference type="ChEBI" id="CHEBI:30616"/>
    </ligand>
</feature>
<feature type="binding site" evidence="1">
    <location>
        <position position="42"/>
    </location>
    <ligand>
        <name>substrate</name>
    </ligand>
</feature>
<feature type="binding site" evidence="1">
    <location>
        <position position="73"/>
    </location>
    <ligand>
        <name>substrate</name>
    </ligand>
</feature>
<feature type="binding site" evidence="1">
    <location>
        <position position="87"/>
    </location>
    <ligand>
        <name>substrate</name>
    </ligand>
</feature>
<feature type="binding site" evidence="1">
    <location>
        <begin position="88"/>
        <end position="90"/>
    </location>
    <ligand>
        <name>ATP</name>
        <dbReference type="ChEBI" id="CHEBI:30616"/>
    </ligand>
</feature>
<feature type="binding site" evidence="1">
    <location>
        <position position="98"/>
    </location>
    <ligand>
        <name>ATP</name>
        <dbReference type="ChEBI" id="CHEBI:30616"/>
    </ligand>
</feature>
<feature type="binding site" evidence="1">
    <location>
        <begin position="123"/>
        <end position="129"/>
    </location>
    <ligand>
        <name>ATP</name>
        <dbReference type="ChEBI" id="CHEBI:30616"/>
    </ligand>
</feature>
<feature type="site" description="Transition state stabilizer" evidence="1">
    <location>
        <position position="18"/>
    </location>
</feature>
<feature type="strand" evidence="3">
    <location>
        <begin position="4"/>
        <end position="9"/>
    </location>
</feature>
<feature type="helix" evidence="3">
    <location>
        <begin position="16"/>
        <end position="25"/>
    </location>
</feature>
<feature type="helix" evidence="3">
    <location>
        <begin position="26"/>
        <end position="28"/>
    </location>
</feature>
<feature type="strand" evidence="3">
    <location>
        <begin position="30"/>
        <end position="36"/>
    </location>
</feature>
<feature type="helix" evidence="3">
    <location>
        <begin position="48"/>
        <end position="58"/>
    </location>
</feature>
<feature type="strand" evidence="3">
    <location>
        <begin position="64"/>
        <end position="68"/>
    </location>
</feature>
<feature type="helix" evidence="3">
    <location>
        <begin position="73"/>
        <end position="79"/>
    </location>
</feature>
<feature type="strand" evidence="3">
    <location>
        <begin position="84"/>
        <end position="89"/>
    </location>
</feature>
<feature type="helix" evidence="3">
    <location>
        <begin position="92"/>
        <end position="108"/>
    </location>
</feature>
<feature type="strand" evidence="3">
    <location>
        <begin position="113"/>
        <end position="118"/>
    </location>
</feature>
<feature type="helix" evidence="3">
    <location>
        <begin position="121"/>
        <end position="123"/>
    </location>
</feature>
<feature type="helix" evidence="3">
    <location>
        <begin position="128"/>
        <end position="136"/>
    </location>
</feature>
<feature type="turn" evidence="3">
    <location>
        <begin position="142"/>
        <end position="144"/>
    </location>
</feature>
<feature type="helix" evidence="3">
    <location>
        <begin position="147"/>
        <end position="152"/>
    </location>
</feature>
<sequence>MKPIAIYPGTFDPLTNGHVDIIERALPLFNKIIVACAPTSRKDPHLKLEERVNLIADVLTDERVEVLPLTGLLVDFAKTHQANFILRGLRAVSDFDYEFQLAHMNYQLSPEIETIFLPAREGYSYVSGTMVREIVTLGGDVSPFVPPLVARHLQKRREK</sequence>
<dbReference type="EC" id="2.7.7.3" evidence="1"/>
<dbReference type="EMBL" id="AE016828">
    <property type="protein sequence ID" value="AAO89846.1"/>
    <property type="molecule type" value="Genomic_DNA"/>
</dbReference>
<dbReference type="RefSeq" id="NP_819332.1">
    <property type="nucleotide sequence ID" value="NC_002971.4"/>
</dbReference>
<dbReference type="RefSeq" id="WP_005771452.1">
    <property type="nucleotide sequence ID" value="NZ_CDBG01000001.1"/>
</dbReference>
<dbReference type="PDB" id="4F3R">
    <property type="method" value="X-ray"/>
    <property type="resolution" value="2.25 A"/>
    <property type="chains" value="A/B/C=1-159"/>
</dbReference>
<dbReference type="PDBsum" id="4F3R"/>
<dbReference type="SMR" id="Q83EM7"/>
<dbReference type="STRING" id="227377.CBU_0288"/>
<dbReference type="EnsemblBacteria" id="AAO89846">
    <property type="protein sequence ID" value="AAO89846"/>
    <property type="gene ID" value="CBU_0288"/>
</dbReference>
<dbReference type="GeneID" id="1208170"/>
<dbReference type="KEGG" id="cbu:CBU_0288"/>
<dbReference type="PATRIC" id="fig|227377.7.peg.281"/>
<dbReference type="eggNOG" id="COG0669">
    <property type="taxonomic scope" value="Bacteria"/>
</dbReference>
<dbReference type="HOGENOM" id="CLU_100149_0_1_6"/>
<dbReference type="OrthoDB" id="9806661at2"/>
<dbReference type="UniPathway" id="UPA00241">
    <property type="reaction ID" value="UER00355"/>
</dbReference>
<dbReference type="EvolutionaryTrace" id="Q83EM7"/>
<dbReference type="Proteomes" id="UP000002671">
    <property type="component" value="Chromosome"/>
</dbReference>
<dbReference type="GO" id="GO:0005737">
    <property type="term" value="C:cytoplasm"/>
    <property type="evidence" value="ECO:0007669"/>
    <property type="project" value="UniProtKB-SubCell"/>
</dbReference>
<dbReference type="GO" id="GO:0005524">
    <property type="term" value="F:ATP binding"/>
    <property type="evidence" value="ECO:0007669"/>
    <property type="project" value="UniProtKB-KW"/>
</dbReference>
<dbReference type="GO" id="GO:0004595">
    <property type="term" value="F:pantetheine-phosphate adenylyltransferase activity"/>
    <property type="evidence" value="ECO:0000318"/>
    <property type="project" value="GO_Central"/>
</dbReference>
<dbReference type="GO" id="GO:0015937">
    <property type="term" value="P:coenzyme A biosynthetic process"/>
    <property type="evidence" value="ECO:0000318"/>
    <property type="project" value="GO_Central"/>
</dbReference>
<dbReference type="CDD" id="cd02163">
    <property type="entry name" value="PPAT"/>
    <property type="match status" value="1"/>
</dbReference>
<dbReference type="Gene3D" id="3.40.50.620">
    <property type="entry name" value="HUPs"/>
    <property type="match status" value="1"/>
</dbReference>
<dbReference type="HAMAP" id="MF_00151">
    <property type="entry name" value="PPAT_bact"/>
    <property type="match status" value="1"/>
</dbReference>
<dbReference type="InterPro" id="IPR004821">
    <property type="entry name" value="Cyt_trans-like"/>
</dbReference>
<dbReference type="InterPro" id="IPR001980">
    <property type="entry name" value="PPAT"/>
</dbReference>
<dbReference type="InterPro" id="IPR014729">
    <property type="entry name" value="Rossmann-like_a/b/a_fold"/>
</dbReference>
<dbReference type="NCBIfam" id="TIGR01510">
    <property type="entry name" value="coaD_prev_kdtB"/>
    <property type="match status" value="1"/>
</dbReference>
<dbReference type="NCBIfam" id="TIGR00125">
    <property type="entry name" value="cyt_tran_rel"/>
    <property type="match status" value="1"/>
</dbReference>
<dbReference type="PANTHER" id="PTHR21342">
    <property type="entry name" value="PHOSPHOPANTETHEINE ADENYLYLTRANSFERASE"/>
    <property type="match status" value="1"/>
</dbReference>
<dbReference type="PANTHER" id="PTHR21342:SF1">
    <property type="entry name" value="PHOSPHOPANTETHEINE ADENYLYLTRANSFERASE"/>
    <property type="match status" value="1"/>
</dbReference>
<dbReference type="Pfam" id="PF01467">
    <property type="entry name" value="CTP_transf_like"/>
    <property type="match status" value="1"/>
</dbReference>
<dbReference type="PRINTS" id="PR01020">
    <property type="entry name" value="LPSBIOSNTHSS"/>
</dbReference>
<dbReference type="SUPFAM" id="SSF52374">
    <property type="entry name" value="Nucleotidylyl transferase"/>
    <property type="match status" value="1"/>
</dbReference>
<protein>
    <recommendedName>
        <fullName evidence="1 2">Phosphopantetheine adenylyltransferase</fullName>
        <ecNumber evidence="1">2.7.7.3</ecNumber>
    </recommendedName>
    <alternativeName>
        <fullName evidence="1">Dephospho-CoA pyrophosphorylase</fullName>
    </alternativeName>
    <alternativeName>
        <fullName evidence="1">Pantetheine-phosphate adenylyltransferase</fullName>
        <shortName evidence="1 2">PPAT</shortName>
    </alternativeName>
</protein>
<proteinExistence type="evidence at protein level"/>
<reference key="1">
    <citation type="journal article" date="2003" name="Proc. Natl. Acad. Sci. U.S.A.">
        <title>Complete genome sequence of the Q-fever pathogen, Coxiella burnetii.</title>
        <authorList>
            <person name="Seshadri R."/>
            <person name="Paulsen I.T."/>
            <person name="Eisen J.A."/>
            <person name="Read T.D."/>
            <person name="Nelson K.E."/>
            <person name="Nelson W.C."/>
            <person name="Ward N.L."/>
            <person name="Tettelin H."/>
            <person name="Davidsen T.M."/>
            <person name="Beanan M.J."/>
            <person name="DeBoy R.T."/>
            <person name="Daugherty S.C."/>
            <person name="Brinkac L.M."/>
            <person name="Madupu R."/>
            <person name="Dodson R.J."/>
            <person name="Khouri H.M."/>
            <person name="Lee K.H."/>
            <person name="Carty H.A."/>
            <person name="Scanlan D."/>
            <person name="Heinzen R.A."/>
            <person name="Thompson H.A."/>
            <person name="Samuel J.E."/>
            <person name="Fraser C.M."/>
            <person name="Heidelberg J.F."/>
        </authorList>
    </citation>
    <scope>NUCLEOTIDE SEQUENCE [LARGE SCALE GENOMIC DNA]</scope>
    <source>
        <strain>RSA 493 / Nine Mile phase I</strain>
    </source>
</reference>
<reference key="2">
    <citation type="journal article" date="2015" name="Proteins">
        <title>Structural genomics for drug design against the pathogen Coxiella burnetii.</title>
        <authorList>
            <person name="Franklin M.C."/>
            <person name="Cheung J."/>
            <person name="Rudolph M.J."/>
            <person name="Burshteyn F."/>
            <person name="Cassidy M."/>
            <person name="Gary E."/>
            <person name="Hillerich B."/>
            <person name="Yao Z.K."/>
            <person name="Carlier P.R."/>
            <person name="Totrov M."/>
            <person name="Love J.D."/>
        </authorList>
    </citation>
    <scope>X-RAY CRYSTALLOGRAPHY (2.25 ANGSTROMS)</scope>
    <source>
        <strain>RSA 493 / Nine Mile phase I</strain>
    </source>
</reference>
<evidence type="ECO:0000255" key="1">
    <source>
        <dbReference type="HAMAP-Rule" id="MF_00151"/>
    </source>
</evidence>
<evidence type="ECO:0000303" key="2">
    <source>
    </source>
</evidence>
<evidence type="ECO:0007829" key="3">
    <source>
        <dbReference type="PDB" id="4F3R"/>
    </source>
</evidence>
<name>COAD_COXBU</name>
<accession>Q83EM7</accession>
<gene>
    <name evidence="1 2" type="primary">coaD</name>
    <name type="ordered locus">CBU_0288</name>
</gene>